<dbReference type="EC" id="2.4.2.17" evidence="1"/>
<dbReference type="EMBL" id="CP000267">
    <property type="protein sequence ID" value="ABD70656.1"/>
    <property type="molecule type" value="Genomic_DNA"/>
</dbReference>
<dbReference type="RefSeq" id="WP_011465222.1">
    <property type="nucleotide sequence ID" value="NC_007908.1"/>
</dbReference>
<dbReference type="SMR" id="Q21U97"/>
<dbReference type="STRING" id="338969.Rfer_2945"/>
<dbReference type="KEGG" id="rfr:Rfer_2945"/>
<dbReference type="eggNOG" id="COG0040">
    <property type="taxonomic scope" value="Bacteria"/>
</dbReference>
<dbReference type="HOGENOM" id="CLU_038115_2_0_4"/>
<dbReference type="OrthoDB" id="9801867at2"/>
<dbReference type="UniPathway" id="UPA00031">
    <property type="reaction ID" value="UER00006"/>
</dbReference>
<dbReference type="Proteomes" id="UP000008332">
    <property type="component" value="Chromosome"/>
</dbReference>
<dbReference type="GO" id="GO:0005737">
    <property type="term" value="C:cytoplasm"/>
    <property type="evidence" value="ECO:0007669"/>
    <property type="project" value="UniProtKB-SubCell"/>
</dbReference>
<dbReference type="GO" id="GO:0005524">
    <property type="term" value="F:ATP binding"/>
    <property type="evidence" value="ECO:0007669"/>
    <property type="project" value="UniProtKB-KW"/>
</dbReference>
<dbReference type="GO" id="GO:0003879">
    <property type="term" value="F:ATP phosphoribosyltransferase activity"/>
    <property type="evidence" value="ECO:0007669"/>
    <property type="project" value="UniProtKB-UniRule"/>
</dbReference>
<dbReference type="GO" id="GO:0000105">
    <property type="term" value="P:L-histidine biosynthetic process"/>
    <property type="evidence" value="ECO:0007669"/>
    <property type="project" value="UniProtKB-UniRule"/>
</dbReference>
<dbReference type="CDD" id="cd13595">
    <property type="entry name" value="PBP2_HisGs"/>
    <property type="match status" value="1"/>
</dbReference>
<dbReference type="FunFam" id="3.40.190.10:FF:000011">
    <property type="entry name" value="ATP phosphoribosyltransferase"/>
    <property type="match status" value="1"/>
</dbReference>
<dbReference type="Gene3D" id="3.40.190.10">
    <property type="entry name" value="Periplasmic binding protein-like II"/>
    <property type="match status" value="2"/>
</dbReference>
<dbReference type="HAMAP" id="MF_01018">
    <property type="entry name" value="HisG_Short"/>
    <property type="match status" value="1"/>
</dbReference>
<dbReference type="InterPro" id="IPR013820">
    <property type="entry name" value="ATP_PRibTrfase_cat"/>
</dbReference>
<dbReference type="InterPro" id="IPR018198">
    <property type="entry name" value="ATP_PRibTrfase_CS"/>
</dbReference>
<dbReference type="InterPro" id="IPR001348">
    <property type="entry name" value="ATP_PRibTrfase_HisG"/>
</dbReference>
<dbReference type="InterPro" id="IPR024893">
    <property type="entry name" value="ATP_PRibTrfase_HisG_short"/>
</dbReference>
<dbReference type="NCBIfam" id="TIGR00070">
    <property type="entry name" value="hisG"/>
    <property type="match status" value="1"/>
</dbReference>
<dbReference type="PANTHER" id="PTHR21403:SF8">
    <property type="entry name" value="ATP PHOSPHORIBOSYLTRANSFERASE"/>
    <property type="match status" value="1"/>
</dbReference>
<dbReference type="PANTHER" id="PTHR21403">
    <property type="entry name" value="ATP PHOSPHORIBOSYLTRANSFERASE ATP-PRTASE"/>
    <property type="match status" value="1"/>
</dbReference>
<dbReference type="Pfam" id="PF01634">
    <property type="entry name" value="HisG"/>
    <property type="match status" value="1"/>
</dbReference>
<dbReference type="SUPFAM" id="SSF53850">
    <property type="entry name" value="Periplasmic binding protein-like II"/>
    <property type="match status" value="1"/>
</dbReference>
<dbReference type="PROSITE" id="PS01316">
    <property type="entry name" value="ATP_P_PHORIBOSYLTR"/>
    <property type="match status" value="1"/>
</dbReference>
<evidence type="ECO:0000255" key="1">
    <source>
        <dbReference type="HAMAP-Rule" id="MF_01018"/>
    </source>
</evidence>
<protein>
    <recommendedName>
        <fullName evidence="1">ATP phosphoribosyltransferase</fullName>
        <shortName evidence="1">ATP-PRT</shortName>
        <shortName evidence="1">ATP-PRTase</shortName>
        <ecNumber evidence="1">2.4.2.17</ecNumber>
    </recommendedName>
</protein>
<proteinExistence type="inferred from homology"/>
<gene>
    <name evidence="1" type="primary">hisG</name>
    <name type="ordered locus">Rfer_2945</name>
</gene>
<organism>
    <name type="scientific">Albidiferax ferrireducens (strain ATCC BAA-621 / DSM 15236 / T118)</name>
    <name type="common">Rhodoferax ferrireducens</name>
    <dbReference type="NCBI Taxonomy" id="338969"/>
    <lineage>
        <taxon>Bacteria</taxon>
        <taxon>Pseudomonadati</taxon>
        <taxon>Pseudomonadota</taxon>
        <taxon>Betaproteobacteria</taxon>
        <taxon>Burkholderiales</taxon>
        <taxon>Comamonadaceae</taxon>
        <taxon>Rhodoferax</taxon>
    </lineage>
</organism>
<reference key="1">
    <citation type="submission" date="2006-02" db="EMBL/GenBank/DDBJ databases">
        <title>Complete sequence of chromosome of Rhodoferax ferrireducens DSM 15236.</title>
        <authorList>
            <person name="Copeland A."/>
            <person name="Lucas S."/>
            <person name="Lapidus A."/>
            <person name="Barry K."/>
            <person name="Detter J.C."/>
            <person name="Glavina del Rio T."/>
            <person name="Hammon N."/>
            <person name="Israni S."/>
            <person name="Pitluck S."/>
            <person name="Brettin T."/>
            <person name="Bruce D."/>
            <person name="Han C."/>
            <person name="Tapia R."/>
            <person name="Gilna P."/>
            <person name="Kiss H."/>
            <person name="Schmutz J."/>
            <person name="Larimer F."/>
            <person name="Land M."/>
            <person name="Kyrpides N."/>
            <person name="Ivanova N."/>
            <person name="Richardson P."/>
        </authorList>
    </citation>
    <scope>NUCLEOTIDE SEQUENCE [LARGE SCALE GENOMIC DNA]</scope>
    <source>
        <strain>ATCC BAA-621 / DSM 15236 / T118</strain>
    </source>
</reference>
<feature type="chain" id="PRO_1000063305" description="ATP phosphoribosyltransferase">
    <location>
        <begin position="1"/>
        <end position="212"/>
    </location>
</feature>
<keyword id="KW-0028">Amino-acid biosynthesis</keyword>
<keyword id="KW-0067">ATP-binding</keyword>
<keyword id="KW-0963">Cytoplasm</keyword>
<keyword id="KW-0328">Glycosyltransferase</keyword>
<keyword id="KW-0368">Histidine biosynthesis</keyword>
<keyword id="KW-0547">Nucleotide-binding</keyword>
<keyword id="KW-1185">Reference proteome</keyword>
<keyword id="KW-0808">Transferase</keyword>
<name>HIS1_ALBFT</name>
<comment type="function">
    <text evidence="1">Catalyzes the condensation of ATP and 5-phosphoribose 1-diphosphate to form N'-(5'-phosphoribosyl)-ATP (PR-ATP). Has a crucial role in the pathway because the rate of histidine biosynthesis seems to be controlled primarily by regulation of HisG enzymatic activity.</text>
</comment>
<comment type="catalytic activity">
    <reaction evidence="1">
        <text>1-(5-phospho-beta-D-ribosyl)-ATP + diphosphate = 5-phospho-alpha-D-ribose 1-diphosphate + ATP</text>
        <dbReference type="Rhea" id="RHEA:18473"/>
        <dbReference type="ChEBI" id="CHEBI:30616"/>
        <dbReference type="ChEBI" id="CHEBI:33019"/>
        <dbReference type="ChEBI" id="CHEBI:58017"/>
        <dbReference type="ChEBI" id="CHEBI:73183"/>
        <dbReference type="EC" id="2.4.2.17"/>
    </reaction>
</comment>
<comment type="pathway">
    <text evidence="1">Amino-acid biosynthesis; L-histidine biosynthesis; L-histidine from 5-phospho-alpha-D-ribose 1-diphosphate: step 1/9.</text>
</comment>
<comment type="subunit">
    <text evidence="1">Heteromultimer composed of HisG and HisZ subunits.</text>
</comment>
<comment type="subcellular location">
    <subcellularLocation>
        <location evidence="1">Cytoplasm</location>
    </subcellularLocation>
</comment>
<comment type="domain">
    <text>Lacks the C-terminal regulatory region which is replaced by HisZ.</text>
</comment>
<comment type="similarity">
    <text evidence="1">Belongs to the ATP phosphoribosyltransferase family. Short subfamily.</text>
</comment>
<sequence length="212" mass="23023">MITLALSKGRIFEETLPLLRAAGIEVLEDPEKSRKLILTTNQPNVRVLVVRASDVPTYVQYGGADLGITGKDTLLEHGSDGLYQPLDLQIAKCRISVAVRADFDYASAVKQGSRLRVATKYVAISREFFAAKGVHVDLIKLYGSMELAPLVGLSDAIVDLVSTGNTLKANHLVEVEHIMDISSRLVVNQAALKLKQAPIRKIIDAFASAISQ</sequence>
<accession>Q21U97</accession>